<organism>
    <name type="scientific">Bifidobacterium longum (strain NCC 2705)</name>
    <dbReference type="NCBI Taxonomy" id="206672"/>
    <lineage>
        <taxon>Bacteria</taxon>
        <taxon>Bacillati</taxon>
        <taxon>Actinomycetota</taxon>
        <taxon>Actinomycetes</taxon>
        <taxon>Bifidobacteriales</taxon>
        <taxon>Bifidobacteriaceae</taxon>
        <taxon>Bifidobacterium</taxon>
    </lineage>
</organism>
<protein>
    <recommendedName>
        <fullName evidence="1">Histidinol dehydrogenase</fullName>
        <shortName evidence="1">HDH</shortName>
        <ecNumber evidence="1">1.1.1.23</ecNumber>
    </recommendedName>
</protein>
<feature type="chain" id="PRO_0000135733" description="Histidinol dehydrogenase">
    <location>
        <begin position="1"/>
        <end position="471"/>
    </location>
</feature>
<feature type="active site" description="Proton acceptor" evidence="1">
    <location>
        <position position="350"/>
    </location>
</feature>
<feature type="active site" description="Proton acceptor" evidence="1">
    <location>
        <position position="351"/>
    </location>
</feature>
<feature type="binding site" evidence="1">
    <location>
        <position position="139"/>
    </location>
    <ligand>
        <name>NAD(+)</name>
        <dbReference type="ChEBI" id="CHEBI:57540"/>
    </ligand>
</feature>
<feature type="binding site" evidence="1">
    <location>
        <position position="204"/>
    </location>
    <ligand>
        <name>NAD(+)</name>
        <dbReference type="ChEBI" id="CHEBI:57540"/>
    </ligand>
</feature>
<feature type="binding site" evidence="1">
    <location>
        <position position="236"/>
    </location>
    <ligand>
        <name>NAD(+)</name>
        <dbReference type="ChEBI" id="CHEBI:57540"/>
    </ligand>
</feature>
<feature type="binding site" evidence="1">
    <location>
        <position position="259"/>
    </location>
    <ligand>
        <name>substrate</name>
    </ligand>
</feature>
<feature type="binding site" evidence="1">
    <location>
        <position position="281"/>
    </location>
    <ligand>
        <name>substrate</name>
    </ligand>
</feature>
<feature type="binding site" evidence="1">
    <location>
        <position position="281"/>
    </location>
    <ligand>
        <name>Zn(2+)</name>
        <dbReference type="ChEBI" id="CHEBI:29105"/>
    </ligand>
</feature>
<feature type="binding site" evidence="1">
    <location>
        <position position="284"/>
    </location>
    <ligand>
        <name>substrate</name>
    </ligand>
</feature>
<feature type="binding site" evidence="1">
    <location>
        <position position="284"/>
    </location>
    <ligand>
        <name>Zn(2+)</name>
        <dbReference type="ChEBI" id="CHEBI:29105"/>
    </ligand>
</feature>
<feature type="binding site" evidence="1">
    <location>
        <position position="351"/>
    </location>
    <ligand>
        <name>substrate</name>
    </ligand>
</feature>
<feature type="binding site" evidence="1">
    <location>
        <position position="384"/>
    </location>
    <ligand>
        <name>substrate</name>
    </ligand>
</feature>
<feature type="binding site" evidence="1">
    <location>
        <position position="384"/>
    </location>
    <ligand>
        <name>Zn(2+)</name>
        <dbReference type="ChEBI" id="CHEBI:29105"/>
    </ligand>
</feature>
<feature type="binding site" evidence="1">
    <location>
        <position position="438"/>
    </location>
    <ligand>
        <name>substrate</name>
    </ligand>
</feature>
<feature type="binding site" evidence="1">
    <location>
        <position position="443"/>
    </location>
    <ligand>
        <name>substrate</name>
    </ligand>
</feature>
<feature type="binding site" evidence="1">
    <location>
        <position position="443"/>
    </location>
    <ligand>
        <name>Zn(2+)</name>
        <dbReference type="ChEBI" id="CHEBI:29105"/>
    </ligand>
</feature>
<gene>
    <name evidence="1" type="primary">hisD</name>
    <name type="ordered locus">BL1295</name>
</gene>
<keyword id="KW-0028">Amino-acid biosynthesis</keyword>
<keyword id="KW-0368">Histidine biosynthesis</keyword>
<keyword id="KW-0479">Metal-binding</keyword>
<keyword id="KW-0520">NAD</keyword>
<keyword id="KW-0560">Oxidoreductase</keyword>
<keyword id="KW-1185">Reference proteome</keyword>
<keyword id="KW-0862">Zinc</keyword>
<accession>Q8G4S9</accession>
<comment type="function">
    <text evidence="1">Catalyzes the sequential NAD-dependent oxidations of L-histidinol to L-histidinaldehyde and then to L-histidine.</text>
</comment>
<comment type="catalytic activity">
    <reaction evidence="1">
        <text>L-histidinol + 2 NAD(+) + H2O = L-histidine + 2 NADH + 3 H(+)</text>
        <dbReference type="Rhea" id="RHEA:20641"/>
        <dbReference type="ChEBI" id="CHEBI:15377"/>
        <dbReference type="ChEBI" id="CHEBI:15378"/>
        <dbReference type="ChEBI" id="CHEBI:57540"/>
        <dbReference type="ChEBI" id="CHEBI:57595"/>
        <dbReference type="ChEBI" id="CHEBI:57699"/>
        <dbReference type="ChEBI" id="CHEBI:57945"/>
        <dbReference type="EC" id="1.1.1.23"/>
    </reaction>
</comment>
<comment type="cofactor">
    <cofactor evidence="1">
        <name>Zn(2+)</name>
        <dbReference type="ChEBI" id="CHEBI:29105"/>
    </cofactor>
    <text evidence="1">Binds 1 zinc ion per subunit.</text>
</comment>
<comment type="pathway">
    <text evidence="1">Amino-acid biosynthesis; L-histidine biosynthesis; L-histidine from 5-phospho-alpha-D-ribose 1-diphosphate: step 9/9.</text>
</comment>
<comment type="similarity">
    <text evidence="1">Belongs to the histidinol dehydrogenase family.</text>
</comment>
<name>HISX_BIFLO</name>
<sequence>MLRWGVMSENIMRIIDLRGQNLSRAELLAAMPRAAMGTSEATDLVRPILDDVKERGAAALRDFEEKFDHVRPKNLRVPVEAIKDALTTLDPEVRAAIEESVRRARAVAANQVPKDFYTDLAEGARVAERWIPIQRVGLYVPGGKAVYPSSVIMNAVPAQAAGVESLAIATPPARDNEEGLPNKTILATCAILGVDEVYAVGGAQAIAMFAYGAKGSEPQDGDILCDPVDKITGPGNIFVATAKSLVSAFVGIDAVAGPTEIGIIADETANPSLLAADLIGQAEHDELAGSVLFTDSTEIADKVQESLKYRVPRTEHAERVHTSLSGTQSAIVLTDGLDQSIDAANAYAAEHLEIQTKDADAVVKRIKNAGAIFRGPYSPVPLGDYMSGSNHVLPTGGTARFAAGLGVHTFMKPVEVIEYDEEGLKALAARINAFAVSEDLPAHGECVLSRFVKDPYDKATLREQEKEAGLR</sequence>
<dbReference type="EC" id="1.1.1.23" evidence="1"/>
<dbReference type="EMBL" id="AE014295">
    <property type="protein sequence ID" value="AAN25096.1"/>
    <property type="molecule type" value="Genomic_DNA"/>
</dbReference>
<dbReference type="RefSeq" id="NP_696460.1">
    <property type="nucleotide sequence ID" value="NC_004307.2"/>
</dbReference>
<dbReference type="SMR" id="Q8G4S9"/>
<dbReference type="STRING" id="206672.BL1295"/>
<dbReference type="EnsemblBacteria" id="AAN25096">
    <property type="protein sequence ID" value="AAN25096"/>
    <property type="gene ID" value="BL1295"/>
</dbReference>
<dbReference type="KEGG" id="blo:BL1295"/>
<dbReference type="PATRIC" id="fig|206672.9.peg.144"/>
<dbReference type="HOGENOM" id="CLU_006732_3_1_11"/>
<dbReference type="OrthoDB" id="9805269at2"/>
<dbReference type="PhylomeDB" id="Q8G4S9"/>
<dbReference type="UniPathway" id="UPA00031">
    <property type="reaction ID" value="UER00014"/>
</dbReference>
<dbReference type="Proteomes" id="UP000000439">
    <property type="component" value="Chromosome"/>
</dbReference>
<dbReference type="GO" id="GO:0005829">
    <property type="term" value="C:cytosol"/>
    <property type="evidence" value="ECO:0007669"/>
    <property type="project" value="TreeGrafter"/>
</dbReference>
<dbReference type="GO" id="GO:0004399">
    <property type="term" value="F:histidinol dehydrogenase activity"/>
    <property type="evidence" value="ECO:0007669"/>
    <property type="project" value="UniProtKB-UniRule"/>
</dbReference>
<dbReference type="GO" id="GO:0051287">
    <property type="term" value="F:NAD binding"/>
    <property type="evidence" value="ECO:0007669"/>
    <property type="project" value="InterPro"/>
</dbReference>
<dbReference type="GO" id="GO:0008270">
    <property type="term" value="F:zinc ion binding"/>
    <property type="evidence" value="ECO:0007669"/>
    <property type="project" value="UniProtKB-UniRule"/>
</dbReference>
<dbReference type="GO" id="GO:0000105">
    <property type="term" value="P:L-histidine biosynthetic process"/>
    <property type="evidence" value="ECO:0007669"/>
    <property type="project" value="UniProtKB-UniRule"/>
</dbReference>
<dbReference type="CDD" id="cd06572">
    <property type="entry name" value="Histidinol_dh"/>
    <property type="match status" value="1"/>
</dbReference>
<dbReference type="FunFam" id="3.40.50.1980:FF:000001">
    <property type="entry name" value="Histidinol dehydrogenase"/>
    <property type="match status" value="1"/>
</dbReference>
<dbReference type="Gene3D" id="1.20.5.1300">
    <property type="match status" value="1"/>
</dbReference>
<dbReference type="Gene3D" id="3.40.50.1980">
    <property type="entry name" value="Nitrogenase molybdenum iron protein domain"/>
    <property type="match status" value="2"/>
</dbReference>
<dbReference type="HAMAP" id="MF_01024">
    <property type="entry name" value="HisD"/>
    <property type="match status" value="1"/>
</dbReference>
<dbReference type="InterPro" id="IPR016161">
    <property type="entry name" value="Ald_DH/histidinol_DH"/>
</dbReference>
<dbReference type="InterPro" id="IPR001692">
    <property type="entry name" value="Histidinol_DH_CS"/>
</dbReference>
<dbReference type="InterPro" id="IPR022695">
    <property type="entry name" value="Histidinol_DH_monofunct"/>
</dbReference>
<dbReference type="InterPro" id="IPR012131">
    <property type="entry name" value="Hstdl_DH"/>
</dbReference>
<dbReference type="NCBIfam" id="TIGR00069">
    <property type="entry name" value="hisD"/>
    <property type="match status" value="1"/>
</dbReference>
<dbReference type="PANTHER" id="PTHR21256:SF2">
    <property type="entry name" value="HISTIDINE BIOSYNTHESIS TRIFUNCTIONAL PROTEIN"/>
    <property type="match status" value="1"/>
</dbReference>
<dbReference type="PANTHER" id="PTHR21256">
    <property type="entry name" value="HISTIDINOL DEHYDROGENASE HDH"/>
    <property type="match status" value="1"/>
</dbReference>
<dbReference type="Pfam" id="PF00815">
    <property type="entry name" value="Histidinol_dh"/>
    <property type="match status" value="1"/>
</dbReference>
<dbReference type="PIRSF" id="PIRSF000099">
    <property type="entry name" value="Histidinol_dh"/>
    <property type="match status" value="1"/>
</dbReference>
<dbReference type="PRINTS" id="PR00083">
    <property type="entry name" value="HOLDHDRGNASE"/>
</dbReference>
<dbReference type="SUPFAM" id="SSF53720">
    <property type="entry name" value="ALDH-like"/>
    <property type="match status" value="1"/>
</dbReference>
<dbReference type="PROSITE" id="PS00611">
    <property type="entry name" value="HISOL_DEHYDROGENASE"/>
    <property type="match status" value="1"/>
</dbReference>
<proteinExistence type="inferred from homology"/>
<reference key="1">
    <citation type="journal article" date="2002" name="Proc. Natl. Acad. Sci. U.S.A.">
        <title>The genome sequence of Bifidobacterium longum reflects its adaptation to the human gastrointestinal tract.</title>
        <authorList>
            <person name="Schell M.A."/>
            <person name="Karmirantzou M."/>
            <person name="Snel B."/>
            <person name="Vilanova D."/>
            <person name="Berger B."/>
            <person name="Pessi G."/>
            <person name="Zwahlen M.-C."/>
            <person name="Desiere F."/>
            <person name="Bork P."/>
            <person name="Delley M."/>
            <person name="Pridmore R.D."/>
            <person name="Arigoni F."/>
        </authorList>
    </citation>
    <scope>NUCLEOTIDE SEQUENCE [LARGE SCALE GENOMIC DNA]</scope>
    <source>
        <strain>NCC 2705</strain>
    </source>
</reference>
<evidence type="ECO:0000255" key="1">
    <source>
        <dbReference type="HAMAP-Rule" id="MF_01024"/>
    </source>
</evidence>